<accession>P49077</accession>
<accession>Q683J9</accession>
<accession>Q94A47</accession>
<accession>Q9LTR1</accession>
<gene>
    <name type="primary">PYRB</name>
    <name type="ordered locus">At3g20330</name>
    <name type="ORF">MQC12.7</name>
</gene>
<reference key="1">
    <citation type="journal article" date="1994" name="Mol. Gen. Genet.">
        <title>Heterospecific cloning of Arabidopsis thaliana cDNAs by direct complementation of pyrimidine auxotrophic mutants of Saccharomyces cerevisiae. I. Cloning and sequence analysis of two cDNAs catalysing the second, fifth and sixth steps of the de novo pyrimidine biosynthesis pathway.</title>
        <authorList>
            <person name="Nasr F."/>
            <person name="Bertauche N."/>
            <person name="Dufour M.E."/>
            <person name="Minet M."/>
            <person name="Lacroute F."/>
        </authorList>
    </citation>
    <scope>NUCLEOTIDE SEQUENCE [MRNA]</scope>
</reference>
<reference key="2">
    <citation type="journal article" date="2000" name="DNA Res.">
        <title>Structural analysis of Arabidopsis thaliana chromosome 3. I. Sequence features of the regions of 4,504,864 bp covered by sixty P1 and TAC clones.</title>
        <authorList>
            <person name="Sato S."/>
            <person name="Nakamura Y."/>
            <person name="Kaneko T."/>
            <person name="Katoh T."/>
            <person name="Asamizu E."/>
            <person name="Tabata S."/>
        </authorList>
    </citation>
    <scope>NUCLEOTIDE SEQUENCE [LARGE SCALE GENOMIC DNA]</scope>
    <source>
        <strain>cv. Columbia</strain>
    </source>
</reference>
<reference key="3">
    <citation type="journal article" date="2017" name="Plant J.">
        <title>Araport11: a complete reannotation of the Arabidopsis thaliana reference genome.</title>
        <authorList>
            <person name="Cheng C.Y."/>
            <person name="Krishnakumar V."/>
            <person name="Chan A.P."/>
            <person name="Thibaud-Nissen F."/>
            <person name="Schobel S."/>
            <person name="Town C.D."/>
        </authorList>
    </citation>
    <scope>GENOME REANNOTATION</scope>
    <source>
        <strain>cv. Columbia</strain>
    </source>
</reference>
<reference key="4">
    <citation type="journal article" date="2003" name="Science">
        <title>Empirical analysis of transcriptional activity in the Arabidopsis genome.</title>
        <authorList>
            <person name="Yamada K."/>
            <person name="Lim J."/>
            <person name="Dale J.M."/>
            <person name="Chen H."/>
            <person name="Shinn P."/>
            <person name="Palm C.J."/>
            <person name="Southwick A.M."/>
            <person name="Wu H.C."/>
            <person name="Kim C.J."/>
            <person name="Nguyen M."/>
            <person name="Pham P.K."/>
            <person name="Cheuk R.F."/>
            <person name="Karlin-Newmann G."/>
            <person name="Liu S.X."/>
            <person name="Lam B."/>
            <person name="Sakano H."/>
            <person name="Wu T."/>
            <person name="Yu G."/>
            <person name="Miranda M."/>
            <person name="Quach H.L."/>
            <person name="Tripp M."/>
            <person name="Chang C.H."/>
            <person name="Lee J.M."/>
            <person name="Toriumi M.J."/>
            <person name="Chan M.M."/>
            <person name="Tang C.C."/>
            <person name="Onodera C.S."/>
            <person name="Deng J.M."/>
            <person name="Akiyama K."/>
            <person name="Ansari Y."/>
            <person name="Arakawa T."/>
            <person name="Banh J."/>
            <person name="Banno F."/>
            <person name="Bowser L."/>
            <person name="Brooks S.Y."/>
            <person name="Carninci P."/>
            <person name="Chao Q."/>
            <person name="Choy N."/>
            <person name="Enju A."/>
            <person name="Goldsmith A.D."/>
            <person name="Gurjal M."/>
            <person name="Hansen N.F."/>
            <person name="Hayashizaki Y."/>
            <person name="Johnson-Hopson C."/>
            <person name="Hsuan V.W."/>
            <person name="Iida K."/>
            <person name="Karnes M."/>
            <person name="Khan S."/>
            <person name="Koesema E."/>
            <person name="Ishida J."/>
            <person name="Jiang P.X."/>
            <person name="Jones T."/>
            <person name="Kawai J."/>
            <person name="Kamiya A."/>
            <person name="Meyers C."/>
            <person name="Nakajima M."/>
            <person name="Narusaka M."/>
            <person name="Seki M."/>
            <person name="Sakurai T."/>
            <person name="Satou M."/>
            <person name="Tamse R."/>
            <person name="Vaysberg M."/>
            <person name="Wallender E.K."/>
            <person name="Wong C."/>
            <person name="Yamamura Y."/>
            <person name="Yuan S."/>
            <person name="Shinozaki K."/>
            <person name="Davis R.W."/>
            <person name="Theologis A."/>
            <person name="Ecker J.R."/>
        </authorList>
    </citation>
    <scope>NUCLEOTIDE SEQUENCE [LARGE SCALE MRNA]</scope>
    <source>
        <strain>cv. Columbia</strain>
    </source>
</reference>
<reference key="5">
    <citation type="submission" date="2004-09" db="EMBL/GenBank/DDBJ databases">
        <title>Large-scale analysis of RIKEN Arabidopsis full-length (RAFL) cDNAs.</title>
        <authorList>
            <person name="Totoki Y."/>
            <person name="Seki M."/>
            <person name="Ishida J."/>
            <person name="Nakajima M."/>
            <person name="Enju A."/>
            <person name="Kamiya A."/>
            <person name="Narusaka M."/>
            <person name="Shin-i T."/>
            <person name="Nakagawa M."/>
            <person name="Sakamoto N."/>
            <person name="Oishi K."/>
            <person name="Kohara Y."/>
            <person name="Kobayashi M."/>
            <person name="Toyoda A."/>
            <person name="Sakaki Y."/>
            <person name="Sakurai T."/>
            <person name="Iida K."/>
            <person name="Akiyama K."/>
            <person name="Satou M."/>
            <person name="Toyoda T."/>
            <person name="Konagaya A."/>
            <person name="Carninci P."/>
            <person name="Kawai J."/>
            <person name="Hayashizaki Y."/>
            <person name="Shinozaki K."/>
        </authorList>
    </citation>
    <scope>NUCLEOTIDE SEQUENCE [LARGE SCALE MRNA]</scope>
    <source>
        <strain>cv. Columbia</strain>
    </source>
</reference>
<reference evidence="6 7 8 9 10 11 12" key="6">
    <citation type="journal article" date="2021" name="Nat. Commun.">
        <title>Mechanisms of feedback inhibition and sequential firing of active sites in plant aspartate transcarbamoylase.</title>
        <authorList>
            <person name="Bellin L."/>
            <person name="Del Cano-Ochoa F."/>
            <person name="Velazquez-Campoy A."/>
            <person name="Moehlmann T."/>
            <person name="Ramon-Maiques S."/>
        </authorList>
    </citation>
    <scope>X-RAY CRYSTALLOGRAPHY (1.38 ANGSTROMS) OF 82-390 IN COMPLEX WITH UMP</scope>
    <scope>ACTIVITY REGULATION</scope>
</reference>
<comment type="function">
    <text evidence="1">Catalyzes the condensation of carbamoyl phosphate and aspartate to form carbamoyl aspartate and inorganic phosphate, the committed step in the de novo pyrimidine nucleotide biosynthesis pathway.</text>
</comment>
<comment type="catalytic activity">
    <reaction evidence="1">
        <text>carbamoyl phosphate + L-aspartate = N-carbamoyl-L-aspartate + phosphate + H(+)</text>
        <dbReference type="Rhea" id="RHEA:20013"/>
        <dbReference type="ChEBI" id="CHEBI:15378"/>
        <dbReference type="ChEBI" id="CHEBI:29991"/>
        <dbReference type="ChEBI" id="CHEBI:32814"/>
        <dbReference type="ChEBI" id="CHEBI:43474"/>
        <dbReference type="ChEBI" id="CHEBI:58228"/>
        <dbReference type="EC" id="2.1.3.2"/>
    </reaction>
</comment>
<comment type="activity regulation">
    <text evidence="5">Feedback inhibited by UMP.</text>
</comment>
<comment type="pathway">
    <text evidence="1">Pyrimidine metabolism; UMP biosynthesis via de novo pathway; (S)-dihydroorotate from bicarbonate: step 2/3.</text>
</comment>
<comment type="subunit">
    <text evidence="4">Homotrimer.</text>
</comment>
<comment type="subcellular location">
    <subcellularLocation>
        <location evidence="4">Plastid</location>
        <location evidence="4">Chloroplast</location>
    </subcellularLocation>
</comment>
<comment type="similarity">
    <text evidence="4">Belongs to the aspartate/ornithine carbamoyltransferase superfamily. ATCase family.</text>
</comment>
<feature type="transit peptide" description="Chloroplast" evidence="2">
    <location>
        <begin position="1"/>
        <end position="68"/>
    </location>
</feature>
<feature type="chain" id="PRO_0000020348" description="Aspartate carbamoyltransferase, chloroplastic">
    <location>
        <begin position="69"/>
        <end position="390"/>
    </location>
</feature>
<feature type="binding site" evidence="1">
    <location>
        <position position="136"/>
    </location>
    <ligand>
        <name>carbamoyl phosphate</name>
        <dbReference type="ChEBI" id="CHEBI:58228"/>
    </ligand>
</feature>
<feature type="binding site" evidence="3">
    <location>
        <position position="136"/>
    </location>
    <ligand>
        <name>UMP</name>
        <dbReference type="ChEBI" id="CHEBI:57865"/>
        <note>inhibitor</note>
    </ligand>
</feature>
<feature type="binding site" evidence="1">
    <location>
        <position position="137"/>
    </location>
    <ligand>
        <name>carbamoyl phosphate</name>
        <dbReference type="ChEBI" id="CHEBI:58228"/>
    </ligand>
</feature>
<feature type="binding site" evidence="3">
    <location>
        <position position="137"/>
    </location>
    <ligand>
        <name>UMP</name>
        <dbReference type="ChEBI" id="CHEBI:57865"/>
        <note>inhibitor</note>
    </ligand>
</feature>
<feature type="binding site" evidence="1">
    <location>
        <position position="166"/>
    </location>
    <ligand>
        <name>L-aspartate</name>
        <dbReference type="ChEBI" id="CHEBI:29991"/>
    </ligand>
</feature>
<feature type="binding site" evidence="1">
    <location>
        <position position="187"/>
    </location>
    <ligand>
        <name>carbamoyl phosphate</name>
        <dbReference type="ChEBI" id="CHEBI:58228"/>
    </ligand>
</feature>
<feature type="binding site" evidence="3">
    <location>
        <position position="187"/>
    </location>
    <ligand>
        <name>UMP</name>
        <dbReference type="ChEBI" id="CHEBI:57865"/>
        <note>inhibitor</note>
    </ligand>
</feature>
<feature type="binding site" evidence="1">
    <location>
        <position position="215"/>
    </location>
    <ligand>
        <name>carbamoyl phosphate</name>
        <dbReference type="ChEBI" id="CHEBI:58228"/>
    </ligand>
</feature>
<feature type="binding site" evidence="3">
    <location>
        <position position="215"/>
    </location>
    <ligand>
        <name>UMP</name>
        <dbReference type="ChEBI" id="CHEBI:57865"/>
        <note>inhibitor</note>
    </ligand>
</feature>
<feature type="binding site" evidence="1">
    <location>
        <position position="218"/>
    </location>
    <ligand>
        <name>carbamoyl phosphate</name>
        <dbReference type="ChEBI" id="CHEBI:58228"/>
    </ligand>
</feature>
<feature type="binding site" evidence="1">
    <location>
        <position position="248"/>
    </location>
    <ligand>
        <name>L-aspartate</name>
        <dbReference type="ChEBI" id="CHEBI:29991"/>
    </ligand>
</feature>
<feature type="binding site" evidence="3">
    <location>
        <position position="248"/>
    </location>
    <ligand>
        <name>UMP</name>
        <dbReference type="ChEBI" id="CHEBI:57865"/>
        <note>inhibitor</note>
    </ligand>
</feature>
<feature type="binding site" evidence="1">
    <location>
        <position position="310"/>
    </location>
    <ligand>
        <name>L-aspartate</name>
        <dbReference type="ChEBI" id="CHEBI:29991"/>
    </ligand>
</feature>
<feature type="binding site" evidence="3">
    <location>
        <position position="310"/>
    </location>
    <ligand>
        <name>UMP</name>
        <dbReference type="ChEBI" id="CHEBI:57865"/>
        <note>inhibitor</note>
    </ligand>
</feature>
<feature type="binding site" evidence="1">
    <location>
        <position position="350"/>
    </location>
    <ligand>
        <name>carbamoyl phosphate</name>
        <dbReference type="ChEBI" id="CHEBI:58228"/>
    </ligand>
</feature>
<feature type="binding site" evidence="1">
    <location>
        <position position="351"/>
    </location>
    <ligand>
        <name>carbamoyl phosphate</name>
        <dbReference type="ChEBI" id="CHEBI:58228"/>
    </ligand>
</feature>
<feature type="sequence conflict" description="In Ref. 4; AAK91399/AAL90999." evidence="4" ref="4">
    <original>T</original>
    <variation>N</variation>
    <location>
        <position position="225"/>
    </location>
</feature>
<feature type="sequence conflict" description="In Ref. 2; CAA50687." evidence="4" ref="2">
    <original>Y</original>
    <variation>F</variation>
    <location>
        <position position="330"/>
    </location>
</feature>
<feature type="sequence conflict" description="In Ref. 4; AAK91399/AAL90999." evidence="4" ref="4">
    <original>R</original>
    <variation>S</variation>
    <location>
        <position position="379"/>
    </location>
</feature>
<feature type="strand" evidence="15">
    <location>
        <begin position="85"/>
        <end position="87"/>
    </location>
</feature>
<feature type="helix" evidence="14">
    <location>
        <begin position="90"/>
        <end position="92"/>
    </location>
</feature>
<feature type="helix" evidence="14">
    <location>
        <begin position="95"/>
        <end position="113"/>
    </location>
</feature>
<feature type="strand" evidence="14">
    <location>
        <begin position="114"/>
        <end position="116"/>
    </location>
</feature>
<feature type="turn" evidence="14">
    <location>
        <begin position="120"/>
        <end position="123"/>
    </location>
</feature>
<feature type="strand" evidence="14">
    <location>
        <begin position="125"/>
        <end position="132"/>
    </location>
</feature>
<feature type="helix" evidence="14">
    <location>
        <begin position="136"/>
        <end position="147"/>
    </location>
</feature>
<feature type="strand" evidence="14">
    <location>
        <begin position="151"/>
        <end position="153"/>
    </location>
</feature>
<feature type="helix" evidence="14">
    <location>
        <begin position="158"/>
        <end position="161"/>
    </location>
</feature>
<feature type="helix" evidence="14">
    <location>
        <begin position="163"/>
        <end position="166"/>
    </location>
</feature>
<feature type="helix" evidence="14">
    <location>
        <begin position="170"/>
        <end position="177"/>
    </location>
</feature>
<feature type="helix" evidence="14">
    <location>
        <begin position="178"/>
        <end position="180"/>
    </location>
</feature>
<feature type="strand" evidence="14">
    <location>
        <begin position="182"/>
        <end position="190"/>
    </location>
</feature>
<feature type="helix" evidence="14">
    <location>
        <begin position="193"/>
        <end position="200"/>
    </location>
</feature>
<feature type="strand" evidence="14">
    <location>
        <begin position="205"/>
        <end position="210"/>
    </location>
</feature>
<feature type="helix" evidence="14">
    <location>
        <begin position="216"/>
        <end position="230"/>
    </location>
</feature>
<feature type="strand" evidence="14">
    <location>
        <begin position="237"/>
        <end position="242"/>
    </location>
</feature>
<feature type="turn" evidence="14">
    <location>
        <begin position="244"/>
        <end position="246"/>
    </location>
</feature>
<feature type="helix" evidence="14">
    <location>
        <begin position="248"/>
        <end position="257"/>
    </location>
</feature>
<feature type="strand" evidence="14">
    <location>
        <begin position="260"/>
        <end position="262"/>
    </location>
</feature>
<feature type="strand" evidence="14">
    <location>
        <begin position="264"/>
        <end position="269"/>
    </location>
</feature>
<feature type="helix" evidence="14">
    <location>
        <begin position="271"/>
        <end position="273"/>
    </location>
</feature>
<feature type="helix" evidence="14">
    <location>
        <begin position="277"/>
        <end position="286"/>
    </location>
</feature>
<feature type="strand" evidence="14">
    <location>
        <begin position="289"/>
        <end position="294"/>
    </location>
</feature>
<feature type="helix" evidence="14">
    <location>
        <begin position="296"/>
        <end position="300"/>
    </location>
</feature>
<feature type="strand" evidence="14">
    <location>
        <begin position="304"/>
        <end position="308"/>
    </location>
</feature>
<feature type="helix" evidence="14">
    <location>
        <begin position="313"/>
        <end position="316"/>
    </location>
</feature>
<feature type="helix" evidence="14">
    <location>
        <begin position="320"/>
        <end position="326"/>
    </location>
</feature>
<feature type="turn" evidence="14">
    <location>
        <begin position="327"/>
        <end position="329"/>
    </location>
</feature>
<feature type="helix" evidence="14">
    <location>
        <begin position="334"/>
        <end position="339"/>
    </location>
</feature>
<feature type="strand" evidence="14">
    <location>
        <begin position="345"/>
        <end position="347"/>
    </location>
</feature>
<feature type="strand" evidence="13">
    <location>
        <begin position="354"/>
        <end position="356"/>
    </location>
</feature>
<feature type="helix" evidence="14">
    <location>
        <begin position="358"/>
        <end position="362"/>
    </location>
</feature>
<feature type="helix" evidence="14">
    <location>
        <begin position="368"/>
        <end position="388"/>
    </location>
</feature>
<dbReference type="EC" id="2.1.3.2" evidence="1"/>
<dbReference type="EMBL" id="X71843">
    <property type="protein sequence ID" value="CAA50687.1"/>
    <property type="molecule type" value="mRNA"/>
</dbReference>
<dbReference type="EMBL" id="AB024036">
    <property type="protein sequence ID" value="BAB02813.1"/>
    <property type="molecule type" value="Genomic_DNA"/>
</dbReference>
<dbReference type="EMBL" id="CP002686">
    <property type="protein sequence ID" value="AEE76365.1"/>
    <property type="molecule type" value="Genomic_DNA"/>
</dbReference>
<dbReference type="EMBL" id="CP002686">
    <property type="protein sequence ID" value="ANM64914.1"/>
    <property type="molecule type" value="Genomic_DNA"/>
</dbReference>
<dbReference type="EMBL" id="AY050381">
    <property type="protein sequence ID" value="AAK91399.1"/>
    <property type="molecule type" value="mRNA"/>
</dbReference>
<dbReference type="EMBL" id="AY090338">
    <property type="protein sequence ID" value="AAL90999.1"/>
    <property type="molecule type" value="mRNA"/>
</dbReference>
<dbReference type="EMBL" id="AK175118">
    <property type="protein sequence ID" value="BAD42881.1"/>
    <property type="molecule type" value="mRNA"/>
</dbReference>
<dbReference type="PIR" id="S46441">
    <property type="entry name" value="S46441"/>
</dbReference>
<dbReference type="RefSeq" id="NP_001326915.1">
    <property type="nucleotide sequence ID" value="NM_001338476.1"/>
</dbReference>
<dbReference type="RefSeq" id="NP_188668.1">
    <property type="nucleotide sequence ID" value="NM_112924.4"/>
</dbReference>
<dbReference type="PDB" id="6YPO">
    <property type="method" value="X-ray"/>
    <property type="resolution" value="1.67 A"/>
    <property type="chains" value="A/B=82-390"/>
</dbReference>
<dbReference type="PDB" id="6YS6">
    <property type="method" value="X-ray"/>
    <property type="resolution" value="1.55 A"/>
    <property type="chains" value="A/B/C=82-390"/>
</dbReference>
<dbReference type="PDB" id="6YSP">
    <property type="method" value="X-ray"/>
    <property type="resolution" value="1.38 A"/>
    <property type="chains" value="A/B/C=82-390"/>
</dbReference>
<dbReference type="PDB" id="6YVB">
    <property type="method" value="X-ray"/>
    <property type="resolution" value="1.83 A"/>
    <property type="chains" value="A/B/C/D/E/F=82-390"/>
</dbReference>
<dbReference type="PDB" id="6YW9">
    <property type="method" value="X-ray"/>
    <property type="resolution" value="1.68 A"/>
    <property type="chains" value="A/B/C=82-390"/>
</dbReference>
<dbReference type="PDB" id="6YWJ">
    <property type="method" value="X-ray"/>
    <property type="resolution" value="2.40 A"/>
    <property type="chains" value="A/B=82-390"/>
</dbReference>
<dbReference type="PDB" id="6YY1">
    <property type="method" value="X-ray"/>
    <property type="resolution" value="3.06 A"/>
    <property type="chains" value="A/B/C/D/E/F=82-390"/>
</dbReference>
<dbReference type="PDBsum" id="6YPO"/>
<dbReference type="PDBsum" id="6YS6"/>
<dbReference type="PDBsum" id="6YSP"/>
<dbReference type="PDBsum" id="6YVB"/>
<dbReference type="PDBsum" id="6YW9"/>
<dbReference type="PDBsum" id="6YWJ"/>
<dbReference type="PDBsum" id="6YY1"/>
<dbReference type="SMR" id="P49077"/>
<dbReference type="BioGRID" id="6909">
    <property type="interactions" value="2"/>
</dbReference>
<dbReference type="FunCoup" id="P49077">
    <property type="interactions" value="1053"/>
</dbReference>
<dbReference type="IntAct" id="P49077">
    <property type="interactions" value="1"/>
</dbReference>
<dbReference type="STRING" id="3702.P49077"/>
<dbReference type="SwissPalm" id="P49077"/>
<dbReference type="PaxDb" id="3702-AT3G20330.1"/>
<dbReference type="ProteomicsDB" id="226017"/>
<dbReference type="EnsemblPlants" id="AT3G20330.1">
    <property type="protein sequence ID" value="AT3G20330.1"/>
    <property type="gene ID" value="AT3G20330"/>
</dbReference>
<dbReference type="EnsemblPlants" id="AT3G20330.2">
    <property type="protein sequence ID" value="AT3G20330.2"/>
    <property type="gene ID" value="AT3G20330"/>
</dbReference>
<dbReference type="GeneID" id="821577"/>
<dbReference type="Gramene" id="AT3G20330.1">
    <property type="protein sequence ID" value="AT3G20330.1"/>
    <property type="gene ID" value="AT3G20330"/>
</dbReference>
<dbReference type="Gramene" id="AT3G20330.2">
    <property type="protein sequence ID" value="AT3G20330.2"/>
    <property type="gene ID" value="AT3G20330"/>
</dbReference>
<dbReference type="KEGG" id="ath:AT3G20330"/>
<dbReference type="Araport" id="AT3G20330"/>
<dbReference type="TAIR" id="AT3G20330">
    <property type="gene designation" value="PYRB"/>
</dbReference>
<dbReference type="eggNOG" id="KOG0370">
    <property type="taxonomic scope" value="Eukaryota"/>
</dbReference>
<dbReference type="HOGENOM" id="CLU_043846_1_1_1"/>
<dbReference type="InParanoid" id="P49077"/>
<dbReference type="OMA" id="VLIMHPG"/>
<dbReference type="PhylomeDB" id="P49077"/>
<dbReference type="BioCyc" id="ARA:AT3G20330-MONOMER"/>
<dbReference type="BioCyc" id="MetaCyc:AT3G20330-MONOMER"/>
<dbReference type="UniPathway" id="UPA00070">
    <property type="reaction ID" value="UER00116"/>
</dbReference>
<dbReference type="CD-CODE" id="4299E36E">
    <property type="entry name" value="Nucleolus"/>
</dbReference>
<dbReference type="PRO" id="PR:P49077"/>
<dbReference type="Proteomes" id="UP000006548">
    <property type="component" value="Chromosome 3"/>
</dbReference>
<dbReference type="ExpressionAtlas" id="P49077">
    <property type="expression patterns" value="baseline and differential"/>
</dbReference>
<dbReference type="GO" id="GO:0009507">
    <property type="term" value="C:chloroplast"/>
    <property type="evidence" value="ECO:0007005"/>
    <property type="project" value="TAIR"/>
</dbReference>
<dbReference type="GO" id="GO:0009570">
    <property type="term" value="C:chloroplast stroma"/>
    <property type="evidence" value="ECO:0007005"/>
    <property type="project" value="TAIR"/>
</dbReference>
<dbReference type="GO" id="GO:0016597">
    <property type="term" value="F:amino acid binding"/>
    <property type="evidence" value="ECO:0007669"/>
    <property type="project" value="InterPro"/>
</dbReference>
<dbReference type="GO" id="GO:0004070">
    <property type="term" value="F:aspartate carbamoyltransferase activity"/>
    <property type="evidence" value="ECO:0007669"/>
    <property type="project" value="UniProtKB-EC"/>
</dbReference>
<dbReference type="GO" id="GO:0006207">
    <property type="term" value="P:'de novo' pyrimidine nucleobase biosynthetic process"/>
    <property type="evidence" value="ECO:0007669"/>
    <property type="project" value="InterPro"/>
</dbReference>
<dbReference type="GO" id="GO:0044205">
    <property type="term" value="P:'de novo' UMP biosynthetic process"/>
    <property type="evidence" value="ECO:0007669"/>
    <property type="project" value="UniProtKB-UniPathway"/>
</dbReference>
<dbReference type="GO" id="GO:0006520">
    <property type="term" value="P:amino acid metabolic process"/>
    <property type="evidence" value="ECO:0007669"/>
    <property type="project" value="InterPro"/>
</dbReference>
<dbReference type="GO" id="GO:0016036">
    <property type="term" value="P:cellular response to phosphate starvation"/>
    <property type="evidence" value="ECO:0000270"/>
    <property type="project" value="TAIR"/>
</dbReference>
<dbReference type="FunFam" id="3.40.50.1370:FF:000001">
    <property type="entry name" value="Aspartate carbamoyltransferase"/>
    <property type="match status" value="1"/>
</dbReference>
<dbReference type="FunFam" id="3.40.50.1370:FF:000002">
    <property type="entry name" value="Aspartate carbamoyltransferase 2"/>
    <property type="match status" value="1"/>
</dbReference>
<dbReference type="Gene3D" id="3.40.50.1370">
    <property type="entry name" value="Aspartate/ornithine carbamoyltransferase"/>
    <property type="match status" value="2"/>
</dbReference>
<dbReference type="HAMAP" id="MF_00001">
    <property type="entry name" value="Asp_carb_tr"/>
    <property type="match status" value="1"/>
</dbReference>
<dbReference type="InterPro" id="IPR006132">
    <property type="entry name" value="Asp/Orn_carbamoyltranf_P-bd"/>
</dbReference>
<dbReference type="InterPro" id="IPR006130">
    <property type="entry name" value="Asp/Orn_carbamoylTrfase"/>
</dbReference>
<dbReference type="InterPro" id="IPR036901">
    <property type="entry name" value="Asp/Orn_carbamoylTrfase_sf"/>
</dbReference>
<dbReference type="InterPro" id="IPR002082">
    <property type="entry name" value="Asp_carbamoyltransf"/>
</dbReference>
<dbReference type="InterPro" id="IPR006131">
    <property type="entry name" value="Asp_carbamoyltransf_Asp/Orn-bd"/>
</dbReference>
<dbReference type="NCBIfam" id="TIGR00670">
    <property type="entry name" value="asp_carb_tr"/>
    <property type="match status" value="1"/>
</dbReference>
<dbReference type="NCBIfam" id="NF002032">
    <property type="entry name" value="PRK00856.1"/>
    <property type="match status" value="1"/>
</dbReference>
<dbReference type="PANTHER" id="PTHR45753:SF6">
    <property type="entry name" value="ASPARTATE CARBAMOYLTRANSFERASE"/>
    <property type="match status" value="1"/>
</dbReference>
<dbReference type="PANTHER" id="PTHR45753">
    <property type="entry name" value="ORNITHINE CARBAMOYLTRANSFERASE, MITOCHONDRIAL"/>
    <property type="match status" value="1"/>
</dbReference>
<dbReference type="Pfam" id="PF00185">
    <property type="entry name" value="OTCace"/>
    <property type="match status" value="1"/>
</dbReference>
<dbReference type="Pfam" id="PF02729">
    <property type="entry name" value="OTCace_N"/>
    <property type="match status" value="1"/>
</dbReference>
<dbReference type="PRINTS" id="PR00100">
    <property type="entry name" value="AOTCASE"/>
</dbReference>
<dbReference type="PRINTS" id="PR00101">
    <property type="entry name" value="ATCASE"/>
</dbReference>
<dbReference type="SUPFAM" id="SSF53671">
    <property type="entry name" value="Aspartate/ornithine carbamoyltransferase"/>
    <property type="match status" value="1"/>
</dbReference>
<dbReference type="PROSITE" id="PS00097">
    <property type="entry name" value="CARBAMOYLTRANSFERASE"/>
    <property type="match status" value="1"/>
</dbReference>
<keyword id="KW-0002">3D-structure</keyword>
<keyword id="KW-0021">Allosteric enzyme</keyword>
<keyword id="KW-0150">Chloroplast</keyword>
<keyword id="KW-0934">Plastid</keyword>
<keyword id="KW-0665">Pyrimidine biosynthesis</keyword>
<keyword id="KW-1185">Reference proteome</keyword>
<keyword id="KW-0808">Transferase</keyword>
<keyword id="KW-0809">Transit peptide</keyword>
<organism>
    <name type="scientific">Arabidopsis thaliana</name>
    <name type="common">Mouse-ear cress</name>
    <dbReference type="NCBI Taxonomy" id="3702"/>
    <lineage>
        <taxon>Eukaryota</taxon>
        <taxon>Viridiplantae</taxon>
        <taxon>Streptophyta</taxon>
        <taxon>Embryophyta</taxon>
        <taxon>Tracheophyta</taxon>
        <taxon>Spermatophyta</taxon>
        <taxon>Magnoliopsida</taxon>
        <taxon>eudicotyledons</taxon>
        <taxon>Gunneridae</taxon>
        <taxon>Pentapetalae</taxon>
        <taxon>rosids</taxon>
        <taxon>malvids</taxon>
        <taxon>Brassicales</taxon>
        <taxon>Brassicaceae</taxon>
        <taxon>Camelineae</taxon>
        <taxon>Arabidopsis</taxon>
    </lineage>
</organism>
<proteinExistence type="evidence at protein level"/>
<protein>
    <recommendedName>
        <fullName>Aspartate carbamoyltransferase, chloroplastic</fullName>
        <ecNumber evidence="1">2.1.3.2</ecNumber>
    </recommendedName>
    <alternativeName>
        <fullName>Aspartate transcarbamylase</fullName>
        <shortName>ATCase</shortName>
    </alternativeName>
</protein>
<sequence length="390" mass="43167">MSIASSLTSATLCGASVFPKALACSSEFPINLPSPFESSKICLTSFPASRDLKKNATLNLTRNVGPVRCHAMQAGTRELKKFELSDVIEGKQFDREMLSAIFDVAREMEKIEKSSSQSEILKGYLMATLFYEPSTRTRLSFESAMKRLGGEVLTTENAREFSSAAKGETLEDTIRTVEGYSDIIVMRHFESGAARKAAATANIPVINAGDGPGEHPTQALLDVYTIQSEIGKLDGISVALVGDLANGRTVRSLAYLLAKFKDVKIYFVSPEIVKMKDDIKDYLTSSGVEWEESSDLMEVASKCDVVYQTRIQRERFGERLDLYEAARGKYIVDKDLLGVMQKKAIIMHPLPRLDEITADVDADPRAAYFRQAKNGLFIRMALLKLLLVGW</sequence>
<evidence type="ECO:0000250" key="1">
    <source>
        <dbReference type="UniProtKB" id="P0A786"/>
    </source>
</evidence>
<evidence type="ECO:0000255" key="2"/>
<evidence type="ECO:0000269" key="3">
    <source>
    </source>
</evidence>
<evidence type="ECO:0000305" key="4"/>
<evidence type="ECO:0000305" key="5">
    <source>
    </source>
</evidence>
<evidence type="ECO:0007744" key="6">
    <source>
        <dbReference type="PDB" id="6YPO"/>
    </source>
</evidence>
<evidence type="ECO:0007744" key="7">
    <source>
        <dbReference type="PDB" id="6YS6"/>
    </source>
</evidence>
<evidence type="ECO:0007744" key="8">
    <source>
        <dbReference type="PDB" id="6YSP"/>
    </source>
</evidence>
<evidence type="ECO:0007744" key="9">
    <source>
        <dbReference type="PDB" id="6YVB"/>
    </source>
</evidence>
<evidence type="ECO:0007744" key="10">
    <source>
        <dbReference type="PDB" id="6YW9"/>
    </source>
</evidence>
<evidence type="ECO:0007744" key="11">
    <source>
        <dbReference type="PDB" id="6YWJ"/>
    </source>
</evidence>
<evidence type="ECO:0007744" key="12">
    <source>
        <dbReference type="PDB" id="6YY1"/>
    </source>
</evidence>
<evidence type="ECO:0007829" key="13">
    <source>
        <dbReference type="PDB" id="6YPO"/>
    </source>
</evidence>
<evidence type="ECO:0007829" key="14">
    <source>
        <dbReference type="PDB" id="6YSP"/>
    </source>
</evidence>
<evidence type="ECO:0007829" key="15">
    <source>
        <dbReference type="PDB" id="6YWJ"/>
    </source>
</evidence>
<name>PYRB_ARATH</name>